<reference key="1">
    <citation type="journal article" date="2001" name="Planta">
        <title>COI1 affects myrosinase activity and controls the expression of two flower-specific myrosinase-binding protein homologues in Arabidopsis.</title>
        <authorList>
            <person name="Capella A.N."/>
            <person name="Menossi M."/>
            <person name="Arruda P."/>
            <person name="Benedetti C.E."/>
        </authorList>
    </citation>
    <scope>NUCLEOTIDE SEQUENCE [MRNA]</scope>
    <source>
        <strain>cv. Landsberg erecta</strain>
        <tissue>Flower</tissue>
    </source>
</reference>
<reference key="2">
    <citation type="journal article" date="2008" name="Plant Cell Physiol.">
        <title>Antagonistic jacalin-related lectins regulate the size of ER body-type beta-glucosidase complexes in Arabidopsis thaliana.</title>
        <authorList>
            <person name="Nagano A.J."/>
            <person name="Fukao Y."/>
            <person name="Fujiwara M."/>
            <person name="Nishimura M."/>
            <person name="Hara-Nishimura I."/>
        </authorList>
    </citation>
    <scope>GENE FAMILY</scope>
    <scope>NOMENCLATURE</scope>
</reference>
<proteinExistence type="evidence at transcript level"/>
<accession>Q9M5W9</accession>
<sequence length="654" mass="69666">MSEKVGAMGGNKGGAFDDGVFDGVKKVIVGKDFNNVTYIKVEYEKDGKFEIREHGTNRGQLKEFSVDYPNEYITAVGGSYDTVFGYGSALIKSLLFKTSYGRTSPILGHTTLLGNPAGKEFMLESKYGGKLLGFHGRSGEALDAIGPHFFAVNSSLKHFKPQGGNGGSAWDDGAFDGVRKVLVGRNGKFVSYIRFEYAKGERTVPHAHGKRQEAPQEFVVDYPNEHITSVEGTIDGYLSSLKFKTSKGRTSPVFGNVVGSKFVFEETSFKLVGFCGRSGDAIDALGAHFAPLPAPTPAPAPAPAPVPVPAPAPVPAPSPAPAPSPAPAPAPAPAPAPTPAPAPAPPNKVEALGGNGGTIFDDGAFDHVRKVYIGQGDSGVAYVKFEYEKDGKRETGEHGKMTVLGTEEFEVESDDYITSAEVSVDNVFGFKSEIVTSLVFKTFKGITSQPFGMESEKKLELKDGKGGKLVGFHGKASDVLYALGAYFAPTTNSITPSTPSTAKKLQARGGNGGASWDDGVFDGVRKILVGQGNDGVAFVTFEYNKGSQAILGDGHGKQTLLGTETFELDYPSEYITSVEGYYDKIFGVEAEVVTSLTFKTNKRTSQPFGMTAGEHFELKEDGYKIVGFHGKAGDLVHQIGVHAVPIFTNYRCVF</sequence>
<comment type="tissue specificity">
    <text>Expressed in flowers. Detected mainly in ovules and styles of immature flowers, but also in pistils, styles, stamens, petals and embryos. Not detected in leaves.</text>
</comment>
<comment type="induction">
    <text evidence="1">Not regulated by wounding, dehydration stress, methyl jasmonate, salicylic acid or abscisic acid treatments.</text>
</comment>
<comment type="similarity">
    <text evidence="2 4">Belongs to the jacalin lectin family.</text>
</comment>
<comment type="caution">
    <text evidence="5">The gene has been cloned in cv. Landsberg erecta, but the tissue specificity and the induction have been determined in cv. Columbia (PubMed:11678272).</text>
</comment>
<evidence type="ECO:0000250" key="1"/>
<evidence type="ECO:0000255" key="2">
    <source>
        <dbReference type="PROSITE-ProRule" id="PRU01088"/>
    </source>
</evidence>
<evidence type="ECO:0000256" key="3">
    <source>
        <dbReference type="SAM" id="MobiDB-lite"/>
    </source>
</evidence>
<evidence type="ECO:0000305" key="4"/>
<evidence type="ECO:0000305" key="5">
    <source>
    </source>
</evidence>
<keyword id="KW-0430">Lectin</keyword>
<keyword id="KW-0677">Repeat</keyword>
<protein>
    <recommendedName>
        <fullName>Myrosinase-binding protein 2</fullName>
        <shortName>MBP</shortName>
    </recommendedName>
    <alternativeName>
        <fullName>Jacalin-related lectin 6</fullName>
    </alternativeName>
</protein>
<feature type="chain" id="PRO_0000430373" description="Myrosinase-binding protein 2">
    <location>
        <begin position="1"/>
        <end position="654"/>
    </location>
</feature>
<feature type="domain" description="Jacalin-type lectin 1" evidence="2">
    <location>
        <begin position="2"/>
        <end position="151"/>
    </location>
</feature>
<feature type="domain" description="Jacalin-type lectin 2" evidence="2">
    <location>
        <begin position="156"/>
        <end position="291"/>
    </location>
</feature>
<feature type="domain" description="Jacalin-type lectin 3" evidence="2">
    <location>
        <begin position="346"/>
        <end position="489"/>
    </location>
</feature>
<feature type="domain" description="Jacalin-type lectin 4" evidence="2">
    <location>
        <begin position="502"/>
        <end position="645"/>
    </location>
</feature>
<feature type="region of interest" description="Disordered" evidence="3">
    <location>
        <begin position="314"/>
        <end position="355"/>
    </location>
</feature>
<feature type="compositionally biased region" description="Pro residues" evidence="3">
    <location>
        <begin position="314"/>
        <end position="346"/>
    </location>
</feature>
<name>JAL6L_ARATH</name>
<organism>
    <name type="scientific">Arabidopsis thaliana</name>
    <name type="common">Mouse-ear cress</name>
    <dbReference type="NCBI Taxonomy" id="3702"/>
    <lineage>
        <taxon>Eukaryota</taxon>
        <taxon>Viridiplantae</taxon>
        <taxon>Streptophyta</taxon>
        <taxon>Embryophyta</taxon>
        <taxon>Tracheophyta</taxon>
        <taxon>Spermatophyta</taxon>
        <taxon>Magnoliopsida</taxon>
        <taxon>eudicotyledons</taxon>
        <taxon>Gunneridae</taxon>
        <taxon>Pentapetalae</taxon>
        <taxon>rosids</taxon>
        <taxon>malvids</taxon>
        <taxon>Brassicales</taxon>
        <taxon>Brassicaceae</taxon>
        <taxon>Camelineae</taxon>
        <taxon>Arabidopsis</taxon>
    </lineage>
</organism>
<dbReference type="EMBL" id="AF222537">
    <property type="protein sequence ID" value="AAF28355.1"/>
    <property type="molecule type" value="mRNA"/>
</dbReference>
<dbReference type="SMR" id="Q9M5W9"/>
<dbReference type="ExpressionAtlas" id="Q9M5W9">
    <property type="expression patterns" value="baseline and differential"/>
</dbReference>
<dbReference type="GO" id="GO:0030246">
    <property type="term" value="F:carbohydrate binding"/>
    <property type="evidence" value="ECO:0007669"/>
    <property type="project" value="UniProtKB-KW"/>
</dbReference>
<dbReference type="CDD" id="cd09612">
    <property type="entry name" value="Jacalin"/>
    <property type="match status" value="4"/>
</dbReference>
<dbReference type="FunFam" id="2.100.10.30:FF:000001">
    <property type="entry name" value="Jacalin-related lectin 33"/>
    <property type="match status" value="4"/>
</dbReference>
<dbReference type="Gene3D" id="2.100.10.30">
    <property type="entry name" value="Jacalin-like lectin domain"/>
    <property type="match status" value="4"/>
</dbReference>
<dbReference type="InterPro" id="IPR001229">
    <property type="entry name" value="Jacalin-like_lectin_dom"/>
</dbReference>
<dbReference type="InterPro" id="IPR033734">
    <property type="entry name" value="Jacalin-like_lectin_dom_plant"/>
</dbReference>
<dbReference type="InterPro" id="IPR036404">
    <property type="entry name" value="Jacalin-like_lectin_dom_sf"/>
</dbReference>
<dbReference type="PANTHER" id="PTHR47293">
    <property type="entry name" value="JACALIN-RELATED LECTIN 3"/>
    <property type="match status" value="1"/>
</dbReference>
<dbReference type="PANTHER" id="PTHR47293:SF75">
    <property type="entry name" value="MYROSINASE-BINDING PROTEIN 2"/>
    <property type="match status" value="1"/>
</dbReference>
<dbReference type="Pfam" id="PF01419">
    <property type="entry name" value="Jacalin"/>
    <property type="match status" value="4"/>
</dbReference>
<dbReference type="SMART" id="SM00915">
    <property type="entry name" value="Jacalin"/>
    <property type="match status" value="4"/>
</dbReference>
<dbReference type="SUPFAM" id="SSF51101">
    <property type="entry name" value="Mannose-binding lectins"/>
    <property type="match status" value="4"/>
</dbReference>
<dbReference type="PROSITE" id="PS51752">
    <property type="entry name" value="JACALIN_LECTIN"/>
    <property type="match status" value="4"/>
</dbReference>
<gene>
    <name type="primary">MBP2</name>
    <name type="synonym">JAL6</name>
    <name type="synonym">MBP1.2</name>
</gene>